<protein>
    <recommendedName>
        <fullName evidence="1">Protein-glutamate methylesterase/protein-glutamine glutaminase</fullName>
        <ecNumber evidence="1">3.1.1.61</ecNumber>
        <ecNumber evidence="1">3.5.1.44</ecNumber>
    </recommendedName>
</protein>
<reference key="1">
    <citation type="journal article" date="2004" name="Nat. Genet.">
        <title>Comparison of genome degradation in Paratyphi A and Typhi, human-restricted serovars of Salmonella enterica that cause typhoid.</title>
        <authorList>
            <person name="McClelland M."/>
            <person name="Sanderson K.E."/>
            <person name="Clifton S.W."/>
            <person name="Latreille P."/>
            <person name="Porwollik S."/>
            <person name="Sabo A."/>
            <person name="Meyer R."/>
            <person name="Bieri T."/>
            <person name="Ozersky P."/>
            <person name="McLellan M."/>
            <person name="Harkins C.R."/>
            <person name="Wang C."/>
            <person name="Nguyen C."/>
            <person name="Berghoff A."/>
            <person name="Elliott G."/>
            <person name="Kohlberg S."/>
            <person name="Strong C."/>
            <person name="Du F."/>
            <person name="Carter J."/>
            <person name="Kremizki C."/>
            <person name="Layman D."/>
            <person name="Leonard S."/>
            <person name="Sun H."/>
            <person name="Fulton L."/>
            <person name="Nash W."/>
            <person name="Miner T."/>
            <person name="Minx P."/>
            <person name="Delehaunty K."/>
            <person name="Fronick C."/>
            <person name="Magrini V."/>
            <person name="Nhan M."/>
            <person name="Warren W."/>
            <person name="Florea L."/>
            <person name="Spieth J."/>
            <person name="Wilson R.K."/>
        </authorList>
    </citation>
    <scope>NUCLEOTIDE SEQUENCE [LARGE SCALE GENOMIC DNA]</scope>
    <source>
        <strain>ATCC 9150 / SARB42</strain>
    </source>
</reference>
<gene>
    <name evidence="1" type="primary">cheB</name>
    <name type="ordered locus">SPA0951</name>
</gene>
<organism>
    <name type="scientific">Salmonella paratyphi A (strain ATCC 9150 / SARB42)</name>
    <dbReference type="NCBI Taxonomy" id="295319"/>
    <lineage>
        <taxon>Bacteria</taxon>
        <taxon>Pseudomonadati</taxon>
        <taxon>Pseudomonadota</taxon>
        <taxon>Gammaproteobacteria</taxon>
        <taxon>Enterobacterales</taxon>
        <taxon>Enterobacteriaceae</taxon>
        <taxon>Salmonella</taxon>
    </lineage>
</organism>
<keyword id="KW-0145">Chemotaxis</keyword>
<keyword id="KW-0963">Cytoplasm</keyword>
<keyword id="KW-0378">Hydrolase</keyword>
<keyword id="KW-0597">Phosphoprotein</keyword>
<sequence>MSKIRVLSVDDSALMRQIMTEIINSHSDMEMVATAPDPLVARDLIKKFNPDVLTLDVEMPRMDGLDFLEKLMRLRPMPVVMVSSLTGKGSEVTLRALELGAIDFVTKPQLGIREGMLAYSEMIAEKVRTAARARIAAHKPMAAPTTLKAGPLLSSEKLIAIGASTGGTEAIRHVLQPLPLSSPAVIITQHMPPGFTRSFAERLNKLCQISVKEAEDGERVLPGHAYIAPGDKHMELARSGANYQIKIHDGPPVNRHRPSVDVLFHSVAKHAGRNAVGVILTGMGNDGAAGMLAMYQAGAWTIAQNEASCVVFGMPREAINMGGVSEVVDLSQVSQQMLAKISAGQAIRI</sequence>
<name>CHEB_SALPA</name>
<feature type="chain" id="PRO_0000225484" description="Protein-glutamate methylesterase/protein-glutamine glutaminase">
    <location>
        <begin position="1"/>
        <end position="349"/>
    </location>
</feature>
<feature type="domain" description="Response regulatory" evidence="1">
    <location>
        <begin position="5"/>
        <end position="122"/>
    </location>
</feature>
<feature type="domain" description="CheB-type methylesterase" evidence="1">
    <location>
        <begin position="152"/>
        <end position="344"/>
    </location>
</feature>
<feature type="active site" evidence="1">
    <location>
        <position position="164"/>
    </location>
</feature>
<feature type="active site" evidence="1">
    <location>
        <position position="190"/>
    </location>
</feature>
<feature type="active site" evidence="1">
    <location>
        <position position="286"/>
    </location>
</feature>
<feature type="modified residue" description="4-aspartylphosphate" evidence="1">
    <location>
        <position position="56"/>
    </location>
</feature>
<dbReference type="EC" id="3.1.1.61" evidence="1"/>
<dbReference type="EC" id="3.5.1.44" evidence="1"/>
<dbReference type="EMBL" id="CP000026">
    <property type="protein sequence ID" value="AAV76926.1"/>
    <property type="molecule type" value="Genomic_DNA"/>
</dbReference>
<dbReference type="RefSeq" id="WP_000036392.1">
    <property type="nucleotide sequence ID" value="NC_006511.1"/>
</dbReference>
<dbReference type="SMR" id="Q5PMY3"/>
<dbReference type="KEGG" id="spt:SPA0951"/>
<dbReference type="HOGENOM" id="CLU_000445_51_0_6"/>
<dbReference type="Proteomes" id="UP000008185">
    <property type="component" value="Chromosome"/>
</dbReference>
<dbReference type="GO" id="GO:0005737">
    <property type="term" value="C:cytoplasm"/>
    <property type="evidence" value="ECO:0007669"/>
    <property type="project" value="UniProtKB-SubCell"/>
</dbReference>
<dbReference type="GO" id="GO:0000156">
    <property type="term" value="F:phosphorelay response regulator activity"/>
    <property type="evidence" value="ECO:0007669"/>
    <property type="project" value="InterPro"/>
</dbReference>
<dbReference type="GO" id="GO:0008984">
    <property type="term" value="F:protein-glutamate methylesterase activity"/>
    <property type="evidence" value="ECO:0007669"/>
    <property type="project" value="UniProtKB-UniRule"/>
</dbReference>
<dbReference type="GO" id="GO:0050568">
    <property type="term" value="F:protein-glutamine glutaminase activity"/>
    <property type="evidence" value="ECO:0007669"/>
    <property type="project" value="UniProtKB-UniRule"/>
</dbReference>
<dbReference type="GO" id="GO:0006935">
    <property type="term" value="P:chemotaxis"/>
    <property type="evidence" value="ECO:0007669"/>
    <property type="project" value="UniProtKB-UniRule"/>
</dbReference>
<dbReference type="CDD" id="cd16351">
    <property type="entry name" value="CheB_like"/>
    <property type="match status" value="1"/>
</dbReference>
<dbReference type="CDD" id="cd17541">
    <property type="entry name" value="REC_CheB-like"/>
    <property type="match status" value="1"/>
</dbReference>
<dbReference type="FunFam" id="3.40.50.180:FF:000001">
    <property type="entry name" value="Protein-glutamate methylesterase/protein-glutamine glutaminase"/>
    <property type="match status" value="1"/>
</dbReference>
<dbReference type="FunFam" id="3.40.50.2300:FF:000060">
    <property type="entry name" value="Protein-glutamate methylesterase/protein-glutamine glutaminase"/>
    <property type="match status" value="1"/>
</dbReference>
<dbReference type="Gene3D" id="3.40.50.2300">
    <property type="match status" value="1"/>
</dbReference>
<dbReference type="Gene3D" id="3.40.50.180">
    <property type="entry name" value="Methylesterase CheB, C-terminal domain"/>
    <property type="match status" value="1"/>
</dbReference>
<dbReference type="HAMAP" id="MF_00099">
    <property type="entry name" value="CheB_chemtxs"/>
    <property type="match status" value="1"/>
</dbReference>
<dbReference type="InterPro" id="IPR008248">
    <property type="entry name" value="CheB-like"/>
</dbReference>
<dbReference type="InterPro" id="IPR035909">
    <property type="entry name" value="CheB_C"/>
</dbReference>
<dbReference type="InterPro" id="IPR011006">
    <property type="entry name" value="CheY-like_superfamily"/>
</dbReference>
<dbReference type="InterPro" id="IPR000673">
    <property type="entry name" value="Sig_transdc_resp-reg_Me-estase"/>
</dbReference>
<dbReference type="InterPro" id="IPR001789">
    <property type="entry name" value="Sig_transdc_resp-reg_receiver"/>
</dbReference>
<dbReference type="NCBIfam" id="NF001965">
    <property type="entry name" value="PRK00742.1"/>
    <property type="match status" value="1"/>
</dbReference>
<dbReference type="NCBIfam" id="NF009206">
    <property type="entry name" value="PRK12555.1"/>
    <property type="match status" value="1"/>
</dbReference>
<dbReference type="PANTHER" id="PTHR42872">
    <property type="entry name" value="PROTEIN-GLUTAMATE METHYLESTERASE/PROTEIN-GLUTAMINE GLUTAMINASE"/>
    <property type="match status" value="1"/>
</dbReference>
<dbReference type="PANTHER" id="PTHR42872:SF6">
    <property type="entry name" value="PROTEIN-GLUTAMATE METHYLESTERASE_PROTEIN-GLUTAMINE GLUTAMINASE"/>
    <property type="match status" value="1"/>
</dbReference>
<dbReference type="Pfam" id="PF01339">
    <property type="entry name" value="CheB_methylest"/>
    <property type="match status" value="1"/>
</dbReference>
<dbReference type="Pfam" id="PF00072">
    <property type="entry name" value="Response_reg"/>
    <property type="match status" value="1"/>
</dbReference>
<dbReference type="PIRSF" id="PIRSF000876">
    <property type="entry name" value="RR_chemtxs_CheB"/>
    <property type="match status" value="1"/>
</dbReference>
<dbReference type="SMART" id="SM00448">
    <property type="entry name" value="REC"/>
    <property type="match status" value="1"/>
</dbReference>
<dbReference type="SUPFAM" id="SSF52172">
    <property type="entry name" value="CheY-like"/>
    <property type="match status" value="1"/>
</dbReference>
<dbReference type="SUPFAM" id="SSF52738">
    <property type="entry name" value="Methylesterase CheB, C-terminal domain"/>
    <property type="match status" value="1"/>
</dbReference>
<dbReference type="PROSITE" id="PS50122">
    <property type="entry name" value="CHEB"/>
    <property type="match status" value="1"/>
</dbReference>
<dbReference type="PROSITE" id="PS50110">
    <property type="entry name" value="RESPONSE_REGULATORY"/>
    <property type="match status" value="1"/>
</dbReference>
<accession>Q5PMY3</accession>
<evidence type="ECO:0000255" key="1">
    <source>
        <dbReference type="HAMAP-Rule" id="MF_00099"/>
    </source>
</evidence>
<comment type="function">
    <text evidence="1">Involved in chemotaxis. Part of a chemotaxis signal transduction system that modulates chemotaxis in response to various stimuli. Catalyzes the demethylation of specific methylglutamate residues introduced into the chemoreceptors (methyl-accepting chemotaxis proteins or MCP) by CheR. Also mediates the irreversible deamidation of specific glutamine residues to glutamic acid.</text>
</comment>
<comment type="catalytic activity">
    <reaction evidence="1">
        <text>[protein]-L-glutamate 5-O-methyl ester + H2O = L-glutamyl-[protein] + methanol + H(+)</text>
        <dbReference type="Rhea" id="RHEA:23236"/>
        <dbReference type="Rhea" id="RHEA-COMP:10208"/>
        <dbReference type="Rhea" id="RHEA-COMP:10311"/>
        <dbReference type="ChEBI" id="CHEBI:15377"/>
        <dbReference type="ChEBI" id="CHEBI:15378"/>
        <dbReference type="ChEBI" id="CHEBI:17790"/>
        <dbReference type="ChEBI" id="CHEBI:29973"/>
        <dbReference type="ChEBI" id="CHEBI:82795"/>
        <dbReference type="EC" id="3.1.1.61"/>
    </reaction>
</comment>
<comment type="catalytic activity">
    <reaction evidence="1">
        <text>L-glutaminyl-[protein] + H2O = L-glutamyl-[protein] + NH4(+)</text>
        <dbReference type="Rhea" id="RHEA:16441"/>
        <dbReference type="Rhea" id="RHEA-COMP:10207"/>
        <dbReference type="Rhea" id="RHEA-COMP:10208"/>
        <dbReference type="ChEBI" id="CHEBI:15377"/>
        <dbReference type="ChEBI" id="CHEBI:28938"/>
        <dbReference type="ChEBI" id="CHEBI:29973"/>
        <dbReference type="ChEBI" id="CHEBI:30011"/>
        <dbReference type="EC" id="3.5.1.44"/>
    </reaction>
</comment>
<comment type="subcellular location">
    <subcellularLocation>
        <location evidence="1">Cytoplasm</location>
    </subcellularLocation>
</comment>
<comment type="domain">
    <text evidence="1">Contains a C-terminal catalytic domain, and an N-terminal region which modulates catalytic activity.</text>
</comment>
<comment type="PTM">
    <text evidence="1">Phosphorylated by CheA. Phosphorylation of the N-terminal regulatory domain activates the methylesterase activity.</text>
</comment>
<comment type="similarity">
    <text evidence="1">Belongs to the CheB family.</text>
</comment>
<proteinExistence type="inferred from homology"/>